<evidence type="ECO:0000255" key="1">
    <source>
        <dbReference type="HAMAP-Rule" id="MF_00328"/>
    </source>
</evidence>
<evidence type="ECO:0000305" key="2"/>
<keyword id="KW-0067">ATP-binding</keyword>
<keyword id="KW-0963">Cytoplasm</keyword>
<keyword id="KW-0418">Kinase</keyword>
<keyword id="KW-0547">Nucleotide-binding</keyword>
<keyword id="KW-0808">Transferase</keyword>
<gene>
    <name evidence="1" type="primary">gmk</name>
    <name type="ordered locus">WD_0439</name>
</gene>
<organism>
    <name type="scientific">Wolbachia pipientis wMel</name>
    <dbReference type="NCBI Taxonomy" id="163164"/>
    <lineage>
        <taxon>Bacteria</taxon>
        <taxon>Pseudomonadati</taxon>
        <taxon>Pseudomonadota</taxon>
        <taxon>Alphaproteobacteria</taxon>
        <taxon>Rickettsiales</taxon>
        <taxon>Anaplasmataceae</taxon>
        <taxon>Wolbachieae</taxon>
        <taxon>Wolbachia</taxon>
    </lineage>
</organism>
<sequence length="201" mass="23021">MTVKSEGVLLVLSSPSGAGKTTISAKLLEQSTNLVRSVSMTTRKPRPGEINGKDYFFVTEEKFHELCKAGQMLEYAKVFENFYGIPRDFIEQNLSSGISVLLSIDWQGAFHLFKLMRKKVVSVFILPPSMEELRLRLQKRNSDDASEIERRLAEAQKEISKRDKYDYVIINDDIDKSVEEISSILNKERLKKLKEKPSLED</sequence>
<name>KGUA_WOLPM</name>
<reference key="1">
    <citation type="journal article" date="2004" name="PLoS Biol.">
        <title>Phylogenomics of the reproductive parasite Wolbachia pipientis wMel: a streamlined genome overrun by mobile genetic elements.</title>
        <authorList>
            <person name="Wu M."/>
            <person name="Sun L.V."/>
            <person name="Vamathevan J.J."/>
            <person name="Riegler M."/>
            <person name="DeBoy R.T."/>
            <person name="Brownlie J.C."/>
            <person name="McGraw E.A."/>
            <person name="Martin W."/>
            <person name="Esser C."/>
            <person name="Ahmadinejad N."/>
            <person name="Wiegand C."/>
            <person name="Madupu R."/>
            <person name="Beanan M.J."/>
            <person name="Brinkac L.M."/>
            <person name="Daugherty S.C."/>
            <person name="Durkin A.S."/>
            <person name="Kolonay J.F."/>
            <person name="Nelson W.C."/>
            <person name="Mohamoud Y."/>
            <person name="Lee P."/>
            <person name="Berry K.J."/>
            <person name="Young M.B."/>
            <person name="Utterback T.R."/>
            <person name="Weidman J.F."/>
            <person name="Nierman W.C."/>
            <person name="Paulsen I.T."/>
            <person name="Nelson K.E."/>
            <person name="Tettelin H."/>
            <person name="O'Neill S.L."/>
            <person name="Eisen J.A."/>
        </authorList>
    </citation>
    <scope>NUCLEOTIDE SEQUENCE [LARGE SCALE GENOMIC DNA]</scope>
</reference>
<protein>
    <recommendedName>
        <fullName evidence="1">Guanylate kinase</fullName>
        <ecNumber evidence="1">2.7.4.8</ecNumber>
    </recommendedName>
    <alternativeName>
        <fullName evidence="1">GMP kinase</fullName>
    </alternativeName>
</protein>
<comment type="function">
    <text evidence="1">Essential for recycling GMP and indirectly, cGMP.</text>
</comment>
<comment type="catalytic activity">
    <reaction evidence="1">
        <text>GMP + ATP = GDP + ADP</text>
        <dbReference type="Rhea" id="RHEA:20780"/>
        <dbReference type="ChEBI" id="CHEBI:30616"/>
        <dbReference type="ChEBI" id="CHEBI:58115"/>
        <dbReference type="ChEBI" id="CHEBI:58189"/>
        <dbReference type="ChEBI" id="CHEBI:456216"/>
        <dbReference type="EC" id="2.7.4.8"/>
    </reaction>
</comment>
<comment type="subcellular location">
    <subcellularLocation>
        <location evidence="1">Cytoplasm</location>
    </subcellularLocation>
</comment>
<comment type="similarity">
    <text evidence="1">Belongs to the guanylate kinase family.</text>
</comment>
<comment type="sequence caution" evidence="2">
    <conflict type="erroneous initiation">
        <sequence resource="EMBL-CDS" id="AAS14162"/>
    </conflict>
</comment>
<proteinExistence type="inferred from homology"/>
<dbReference type="EC" id="2.7.4.8" evidence="1"/>
<dbReference type="EMBL" id="AE017196">
    <property type="protein sequence ID" value="AAS14162.1"/>
    <property type="status" value="ALT_INIT"/>
    <property type="molecule type" value="Genomic_DNA"/>
</dbReference>
<dbReference type="RefSeq" id="WP_022626283.1">
    <property type="nucleotide sequence ID" value="NZ_OX384529.1"/>
</dbReference>
<dbReference type="SMR" id="Q73HV1"/>
<dbReference type="EnsemblBacteria" id="AAS14162">
    <property type="protein sequence ID" value="AAS14162"/>
    <property type="gene ID" value="WD_0439"/>
</dbReference>
<dbReference type="GeneID" id="70035928"/>
<dbReference type="KEGG" id="wol:WD_0439"/>
<dbReference type="eggNOG" id="COG0194">
    <property type="taxonomic scope" value="Bacteria"/>
</dbReference>
<dbReference type="Proteomes" id="UP000008215">
    <property type="component" value="Chromosome"/>
</dbReference>
<dbReference type="GO" id="GO:0005829">
    <property type="term" value="C:cytosol"/>
    <property type="evidence" value="ECO:0007669"/>
    <property type="project" value="TreeGrafter"/>
</dbReference>
<dbReference type="GO" id="GO:0005524">
    <property type="term" value="F:ATP binding"/>
    <property type="evidence" value="ECO:0007669"/>
    <property type="project" value="UniProtKB-UniRule"/>
</dbReference>
<dbReference type="GO" id="GO:0004385">
    <property type="term" value="F:guanylate kinase activity"/>
    <property type="evidence" value="ECO:0007669"/>
    <property type="project" value="UniProtKB-UniRule"/>
</dbReference>
<dbReference type="CDD" id="cd00071">
    <property type="entry name" value="GMPK"/>
    <property type="match status" value="1"/>
</dbReference>
<dbReference type="FunFam" id="3.30.63.10:FF:000002">
    <property type="entry name" value="Guanylate kinase 1"/>
    <property type="match status" value="1"/>
</dbReference>
<dbReference type="Gene3D" id="3.30.63.10">
    <property type="entry name" value="Guanylate Kinase phosphate binding domain"/>
    <property type="match status" value="1"/>
</dbReference>
<dbReference type="Gene3D" id="3.40.50.300">
    <property type="entry name" value="P-loop containing nucleotide triphosphate hydrolases"/>
    <property type="match status" value="1"/>
</dbReference>
<dbReference type="HAMAP" id="MF_00328">
    <property type="entry name" value="Guanylate_kinase"/>
    <property type="match status" value="1"/>
</dbReference>
<dbReference type="InterPro" id="IPR008145">
    <property type="entry name" value="GK/Ca_channel_bsu"/>
</dbReference>
<dbReference type="InterPro" id="IPR008144">
    <property type="entry name" value="Guanylate_kin-like_dom"/>
</dbReference>
<dbReference type="InterPro" id="IPR017665">
    <property type="entry name" value="Guanylate_kinase"/>
</dbReference>
<dbReference type="InterPro" id="IPR020590">
    <property type="entry name" value="Guanylate_kinase_CS"/>
</dbReference>
<dbReference type="InterPro" id="IPR027417">
    <property type="entry name" value="P-loop_NTPase"/>
</dbReference>
<dbReference type="NCBIfam" id="TIGR03263">
    <property type="entry name" value="guanyl_kin"/>
    <property type="match status" value="1"/>
</dbReference>
<dbReference type="PANTHER" id="PTHR23117:SF13">
    <property type="entry name" value="GUANYLATE KINASE"/>
    <property type="match status" value="1"/>
</dbReference>
<dbReference type="PANTHER" id="PTHR23117">
    <property type="entry name" value="GUANYLATE KINASE-RELATED"/>
    <property type="match status" value="1"/>
</dbReference>
<dbReference type="Pfam" id="PF00625">
    <property type="entry name" value="Guanylate_kin"/>
    <property type="match status" value="1"/>
</dbReference>
<dbReference type="SMART" id="SM00072">
    <property type="entry name" value="GuKc"/>
    <property type="match status" value="1"/>
</dbReference>
<dbReference type="SUPFAM" id="SSF52540">
    <property type="entry name" value="P-loop containing nucleoside triphosphate hydrolases"/>
    <property type="match status" value="1"/>
</dbReference>
<dbReference type="PROSITE" id="PS00856">
    <property type="entry name" value="GUANYLATE_KINASE_1"/>
    <property type="match status" value="1"/>
</dbReference>
<dbReference type="PROSITE" id="PS50052">
    <property type="entry name" value="GUANYLATE_KINASE_2"/>
    <property type="match status" value="1"/>
</dbReference>
<feature type="chain" id="PRO_0000170641" description="Guanylate kinase">
    <location>
        <begin position="1"/>
        <end position="201"/>
    </location>
</feature>
<feature type="domain" description="Guanylate kinase-like" evidence="1">
    <location>
        <begin position="7"/>
        <end position="186"/>
    </location>
</feature>
<feature type="binding site" evidence="1">
    <location>
        <begin position="14"/>
        <end position="21"/>
    </location>
    <ligand>
        <name>ATP</name>
        <dbReference type="ChEBI" id="CHEBI:30616"/>
    </ligand>
</feature>
<accession>Q73HV1</accession>